<protein>
    <recommendedName>
        <fullName>Spondin-1</fullName>
    </recommendedName>
    <alternativeName>
        <fullName>F-spondin</fullName>
    </alternativeName>
    <alternativeName>
        <fullName>Vascular smooth muscle cell growth-promoting factor</fullName>
    </alternativeName>
</protein>
<dbReference type="EMBL" id="AB051390">
    <property type="protein sequence ID" value="BAB18461.1"/>
    <property type="molecule type" value="mRNA"/>
</dbReference>
<dbReference type="EMBL" id="AK074803">
    <property type="protein sequence ID" value="BAC11217.1"/>
    <property type="molecule type" value="mRNA"/>
</dbReference>
<dbReference type="EMBL" id="AK291780">
    <property type="protein sequence ID" value="BAF84469.1"/>
    <property type="molecule type" value="mRNA"/>
</dbReference>
<dbReference type="EMBL" id="CH471064">
    <property type="protein sequence ID" value="EAW68488.1"/>
    <property type="molecule type" value="Genomic_DNA"/>
</dbReference>
<dbReference type="EMBL" id="CH471064">
    <property type="protein sequence ID" value="EAW68489.1"/>
    <property type="molecule type" value="Genomic_DNA"/>
</dbReference>
<dbReference type="EMBL" id="BC019825">
    <property type="protein sequence ID" value="AAH19825.1"/>
    <property type="molecule type" value="mRNA"/>
</dbReference>
<dbReference type="EMBL" id="BC136513">
    <property type="protein sequence ID" value="AAI36514.1"/>
    <property type="molecule type" value="mRNA"/>
</dbReference>
<dbReference type="EMBL" id="BC136563">
    <property type="protein sequence ID" value="AAI36564.1"/>
    <property type="molecule type" value="mRNA"/>
</dbReference>
<dbReference type="EMBL" id="AB018305">
    <property type="protein sequence ID" value="BAA34482.2"/>
    <property type="molecule type" value="mRNA"/>
</dbReference>
<dbReference type="CCDS" id="CCDS73262.1"/>
<dbReference type="RefSeq" id="NP_006099.2">
    <property type="nucleotide sequence ID" value="NM_006108.4"/>
</dbReference>
<dbReference type="PDB" id="2ZOT">
    <property type="method" value="X-ray"/>
    <property type="resolution" value="2.70 A"/>
    <property type="chains" value="A/B/C/D=29-198"/>
</dbReference>
<dbReference type="PDB" id="2ZOU">
    <property type="method" value="X-ray"/>
    <property type="resolution" value="1.45 A"/>
    <property type="chains" value="A/B=40-186"/>
</dbReference>
<dbReference type="PDB" id="3COO">
    <property type="method" value="X-ray"/>
    <property type="resolution" value="2.00 A"/>
    <property type="chains" value="A/B=29-194"/>
</dbReference>
<dbReference type="PDB" id="3Q13">
    <property type="method" value="X-ray"/>
    <property type="resolution" value="1.95 A"/>
    <property type="chains" value="A=191-434"/>
</dbReference>
<dbReference type="PDBsum" id="2ZOT"/>
<dbReference type="PDBsum" id="2ZOU"/>
<dbReference type="PDBsum" id="3COO"/>
<dbReference type="PDBsum" id="3Q13"/>
<dbReference type="SMR" id="Q9HCB6"/>
<dbReference type="BioGRID" id="115687">
    <property type="interactions" value="25"/>
</dbReference>
<dbReference type="FunCoup" id="Q9HCB6">
    <property type="interactions" value="79"/>
</dbReference>
<dbReference type="IntAct" id="Q9HCB6">
    <property type="interactions" value="25"/>
</dbReference>
<dbReference type="STRING" id="9606.ENSP00000460236"/>
<dbReference type="GlyConnect" id="1768">
    <property type="glycosylation" value="5 N-Linked glycans (1 site)"/>
</dbReference>
<dbReference type="GlyCosmos" id="Q9HCB6">
    <property type="glycosylation" value="13 sites, 7 glycans"/>
</dbReference>
<dbReference type="GlyGen" id="Q9HCB6">
    <property type="glycosylation" value="14 sites, 22 N-linked glycans (1 site), 3 O-linked glycans (4 sites)"/>
</dbReference>
<dbReference type="iPTMnet" id="Q9HCB6"/>
<dbReference type="PhosphoSitePlus" id="Q9HCB6"/>
<dbReference type="BioMuta" id="SPON1"/>
<dbReference type="DMDM" id="52783472"/>
<dbReference type="jPOST" id="Q9HCB6"/>
<dbReference type="MassIVE" id="Q9HCB6"/>
<dbReference type="PaxDb" id="9606-ENSP00000460236"/>
<dbReference type="PeptideAtlas" id="Q9HCB6"/>
<dbReference type="ProteomicsDB" id="81664"/>
<dbReference type="Pumba" id="Q9HCB6"/>
<dbReference type="Antibodypedia" id="62004">
    <property type="antibodies" value="164 antibodies from 26 providers"/>
</dbReference>
<dbReference type="DNASU" id="10418"/>
<dbReference type="Ensembl" id="ENST00000576479.4">
    <property type="protein sequence ID" value="ENSP00000460236.1"/>
    <property type="gene ID" value="ENSG00000262655.4"/>
</dbReference>
<dbReference type="GeneID" id="10418"/>
<dbReference type="KEGG" id="hsa:10418"/>
<dbReference type="MANE-Select" id="ENST00000576479.4">
    <property type="protein sequence ID" value="ENSP00000460236.1"/>
    <property type="RefSeq nucleotide sequence ID" value="NM_006108.4"/>
    <property type="RefSeq protein sequence ID" value="NP_006099.2"/>
</dbReference>
<dbReference type="UCSC" id="uc031xfv.2">
    <property type="organism name" value="human"/>
</dbReference>
<dbReference type="AGR" id="HGNC:11252"/>
<dbReference type="CTD" id="10418"/>
<dbReference type="DisGeNET" id="10418"/>
<dbReference type="GeneCards" id="SPON1"/>
<dbReference type="HGNC" id="HGNC:11252">
    <property type="gene designation" value="SPON1"/>
</dbReference>
<dbReference type="HPA" id="ENSG00000262655">
    <property type="expression patterns" value="Low tissue specificity"/>
</dbReference>
<dbReference type="MIM" id="604989">
    <property type="type" value="gene"/>
</dbReference>
<dbReference type="neXtProt" id="NX_Q9HCB6"/>
<dbReference type="OpenTargets" id="ENSG00000262655"/>
<dbReference type="PharmGKB" id="PA36082"/>
<dbReference type="VEuPathDB" id="HostDB:ENSG00000262655"/>
<dbReference type="eggNOG" id="KOG3539">
    <property type="taxonomic scope" value="Eukaryota"/>
</dbReference>
<dbReference type="GeneTree" id="ENSGT00940000154910"/>
<dbReference type="HOGENOM" id="CLU_014540_1_0_1"/>
<dbReference type="InParanoid" id="Q9HCB6"/>
<dbReference type="OMA" id="IPRIEGC"/>
<dbReference type="OrthoDB" id="347314at2759"/>
<dbReference type="PAN-GO" id="Q9HCB6">
    <property type="GO annotations" value="2 GO annotations based on evolutionary models"/>
</dbReference>
<dbReference type="PhylomeDB" id="Q9HCB6"/>
<dbReference type="PathwayCommons" id="Q9HCB6"/>
<dbReference type="Reactome" id="R-HSA-5083635">
    <property type="pathway name" value="Defective B3GALTL causes PpS"/>
</dbReference>
<dbReference type="Reactome" id="R-HSA-5173214">
    <property type="pathway name" value="O-glycosylation of TSR domain-containing proteins"/>
</dbReference>
<dbReference type="SignaLink" id="Q9HCB6"/>
<dbReference type="SIGNOR" id="Q9HCB6"/>
<dbReference type="BioGRID-ORCS" id="10418">
    <property type="hits" value="9 hits in 255 CRISPR screens"/>
</dbReference>
<dbReference type="ChiTaRS" id="SPON1">
    <property type="organism name" value="human"/>
</dbReference>
<dbReference type="EvolutionaryTrace" id="Q9HCB6"/>
<dbReference type="GeneWiki" id="Spondin_1"/>
<dbReference type="GenomeRNAi" id="10418"/>
<dbReference type="Pharos" id="Q9HCB6">
    <property type="development level" value="Tbio"/>
</dbReference>
<dbReference type="PRO" id="PR:Q9HCB6"/>
<dbReference type="Proteomes" id="UP000005640">
    <property type="component" value="Chromosome 11"/>
</dbReference>
<dbReference type="RNAct" id="Q9HCB6">
    <property type="molecule type" value="protein"/>
</dbReference>
<dbReference type="Bgee" id="ENSG00000262655">
    <property type="expression patterns" value="Expressed in gall bladder and 195 other cell types or tissues"/>
</dbReference>
<dbReference type="GO" id="GO:0005788">
    <property type="term" value="C:endoplasmic reticulum lumen"/>
    <property type="evidence" value="ECO:0000304"/>
    <property type="project" value="Reactome"/>
</dbReference>
<dbReference type="GO" id="GO:0031012">
    <property type="term" value="C:extracellular matrix"/>
    <property type="evidence" value="ECO:0000318"/>
    <property type="project" value="GO_Central"/>
</dbReference>
<dbReference type="GO" id="GO:0005615">
    <property type="term" value="C:extracellular space"/>
    <property type="evidence" value="ECO:0007005"/>
    <property type="project" value="BHF-UCL"/>
</dbReference>
<dbReference type="GO" id="GO:0005201">
    <property type="term" value="F:extracellular matrix structural constituent"/>
    <property type="evidence" value="ECO:0000250"/>
    <property type="project" value="BHF-UCL"/>
</dbReference>
<dbReference type="GO" id="GO:0050693">
    <property type="term" value="F:LBD domain binding"/>
    <property type="evidence" value="ECO:0007669"/>
    <property type="project" value="Ensembl"/>
</dbReference>
<dbReference type="GO" id="GO:0046872">
    <property type="term" value="F:metal ion binding"/>
    <property type="evidence" value="ECO:0007669"/>
    <property type="project" value="UniProtKB-KW"/>
</dbReference>
<dbReference type="GO" id="GO:0007155">
    <property type="term" value="P:cell adhesion"/>
    <property type="evidence" value="ECO:0000318"/>
    <property type="project" value="GO_Central"/>
</dbReference>
<dbReference type="GO" id="GO:1902430">
    <property type="term" value="P:negative regulation of amyloid-beta formation"/>
    <property type="evidence" value="ECO:0007669"/>
    <property type="project" value="Ensembl"/>
</dbReference>
<dbReference type="GO" id="GO:1902993">
    <property type="term" value="P:positive regulation of amyloid precursor protein catabolic process"/>
    <property type="evidence" value="ECO:0007669"/>
    <property type="project" value="Ensembl"/>
</dbReference>
<dbReference type="GO" id="GO:0010954">
    <property type="term" value="P:positive regulation of protein processing"/>
    <property type="evidence" value="ECO:0007669"/>
    <property type="project" value="Ensembl"/>
</dbReference>
<dbReference type="GO" id="GO:0016485">
    <property type="term" value="P:protein processing"/>
    <property type="evidence" value="ECO:0007669"/>
    <property type="project" value="Ensembl"/>
</dbReference>
<dbReference type="CDD" id="cd08544">
    <property type="entry name" value="Reeler"/>
    <property type="match status" value="1"/>
</dbReference>
<dbReference type="FunFam" id="2.20.100.10:FF:000026">
    <property type="entry name" value="Spondin 1"/>
    <property type="match status" value="1"/>
</dbReference>
<dbReference type="FunFam" id="2.20.100.10:FF:000013">
    <property type="entry name" value="Spondin 1a"/>
    <property type="match status" value="2"/>
</dbReference>
<dbReference type="FunFam" id="2.60.40.2130:FF:000001">
    <property type="entry name" value="Spondin 1a"/>
    <property type="match status" value="1"/>
</dbReference>
<dbReference type="FunFam" id="2.20.100.10:FF:000024">
    <property type="entry name" value="Spondin-1"/>
    <property type="match status" value="1"/>
</dbReference>
<dbReference type="FunFam" id="2.20.100.10:FF:000034">
    <property type="entry name" value="Spondin-1"/>
    <property type="match status" value="1"/>
</dbReference>
<dbReference type="FunFam" id="2.20.100.10:FF:000081">
    <property type="entry name" value="Spondin-1"/>
    <property type="match status" value="1"/>
</dbReference>
<dbReference type="FunFam" id="2.60.40.4060:FF:000002">
    <property type="entry name" value="Spondin-1"/>
    <property type="match status" value="1"/>
</dbReference>
<dbReference type="Gene3D" id="2.60.40.2130">
    <property type="entry name" value="F-spondin domain"/>
    <property type="match status" value="1"/>
</dbReference>
<dbReference type="Gene3D" id="2.60.40.4060">
    <property type="entry name" value="Reeler domain"/>
    <property type="match status" value="1"/>
</dbReference>
<dbReference type="Gene3D" id="2.20.100.10">
    <property type="entry name" value="Thrombospondin type-1 (TSP1) repeat"/>
    <property type="match status" value="6"/>
</dbReference>
<dbReference type="InterPro" id="IPR002861">
    <property type="entry name" value="Reeler_dom"/>
</dbReference>
<dbReference type="InterPro" id="IPR042307">
    <property type="entry name" value="Reeler_sf"/>
</dbReference>
<dbReference type="InterPro" id="IPR051418">
    <property type="entry name" value="Spondin/Thrombospondin_T1"/>
</dbReference>
<dbReference type="InterPro" id="IPR009465">
    <property type="entry name" value="Spondin_N"/>
</dbReference>
<dbReference type="InterPro" id="IPR038678">
    <property type="entry name" value="Spondin_N_sf"/>
</dbReference>
<dbReference type="InterPro" id="IPR000884">
    <property type="entry name" value="TSP1_rpt"/>
</dbReference>
<dbReference type="InterPro" id="IPR036383">
    <property type="entry name" value="TSP1_rpt_sf"/>
</dbReference>
<dbReference type="InterPro" id="IPR044004">
    <property type="entry name" value="TSP1_spondin_dom"/>
</dbReference>
<dbReference type="NCBIfam" id="NF038123">
    <property type="entry name" value="NF038123_dom"/>
    <property type="match status" value="1"/>
</dbReference>
<dbReference type="PANTHER" id="PTHR11311">
    <property type="entry name" value="SPONDIN"/>
    <property type="match status" value="1"/>
</dbReference>
<dbReference type="PANTHER" id="PTHR11311:SF16">
    <property type="entry name" value="SPONDIN-1"/>
    <property type="match status" value="1"/>
</dbReference>
<dbReference type="Pfam" id="PF02014">
    <property type="entry name" value="Reeler"/>
    <property type="match status" value="1"/>
</dbReference>
<dbReference type="Pfam" id="PF06468">
    <property type="entry name" value="Spond_N"/>
    <property type="match status" value="1"/>
</dbReference>
<dbReference type="Pfam" id="PF19028">
    <property type="entry name" value="TSP1_spondin"/>
    <property type="match status" value="1"/>
</dbReference>
<dbReference type="Pfam" id="PF00090">
    <property type="entry name" value="TSP_1"/>
    <property type="match status" value="5"/>
</dbReference>
<dbReference type="SMART" id="SM00209">
    <property type="entry name" value="TSP1"/>
    <property type="match status" value="6"/>
</dbReference>
<dbReference type="SUPFAM" id="SSF82895">
    <property type="entry name" value="TSP-1 type 1 repeat"/>
    <property type="match status" value="6"/>
</dbReference>
<dbReference type="PROSITE" id="PS51019">
    <property type="entry name" value="REELIN"/>
    <property type="match status" value="1"/>
</dbReference>
<dbReference type="PROSITE" id="PS51020">
    <property type="entry name" value="SPONDIN"/>
    <property type="match status" value="1"/>
</dbReference>
<dbReference type="PROSITE" id="PS50092">
    <property type="entry name" value="TSP1"/>
    <property type="match status" value="6"/>
</dbReference>
<evidence type="ECO:0000250" key="1"/>
<evidence type="ECO:0000255" key="2"/>
<evidence type="ECO:0000255" key="3">
    <source>
        <dbReference type="PROSITE-ProRule" id="PRU00210"/>
    </source>
</evidence>
<evidence type="ECO:0000255" key="4">
    <source>
        <dbReference type="PROSITE-ProRule" id="PRU00363"/>
    </source>
</evidence>
<evidence type="ECO:0000255" key="5">
    <source>
        <dbReference type="PROSITE-ProRule" id="PRU00364"/>
    </source>
</evidence>
<evidence type="ECO:0000269" key="6">
    <source>
    </source>
</evidence>
<evidence type="ECO:0000269" key="7">
    <source>
    </source>
</evidence>
<evidence type="ECO:0000269" key="8">
    <source>
    </source>
</evidence>
<evidence type="ECO:0000269" key="9">
    <source>
    </source>
</evidence>
<evidence type="ECO:0000269" key="10">
    <source>
    </source>
</evidence>
<evidence type="ECO:0000269" key="11">
    <source>
    </source>
</evidence>
<evidence type="ECO:0000305" key="12"/>
<evidence type="ECO:0007744" key="13">
    <source>
        <dbReference type="PDB" id="2ZOT"/>
    </source>
</evidence>
<evidence type="ECO:0007744" key="14">
    <source>
        <dbReference type="PDB" id="2ZOU"/>
    </source>
</evidence>
<evidence type="ECO:0007744" key="15">
    <source>
        <dbReference type="PDB" id="3COO"/>
    </source>
</evidence>
<evidence type="ECO:0007744" key="16">
    <source>
        <dbReference type="PDB" id="3Q13"/>
    </source>
</evidence>
<evidence type="ECO:0007829" key="17">
    <source>
        <dbReference type="PDB" id="2ZOU"/>
    </source>
</evidence>
<evidence type="ECO:0007829" key="18">
    <source>
        <dbReference type="PDB" id="3COO"/>
    </source>
</evidence>
<evidence type="ECO:0007829" key="19">
    <source>
        <dbReference type="PDB" id="3Q13"/>
    </source>
</evidence>
<accession>Q9HCB6</accession>
<accession>A8K6W5</accession>
<accession>O94862</accession>
<accession>Q8NCD7</accession>
<accession>Q8WUR5</accession>
<comment type="function">
    <text evidence="1">Cell adhesion protein that promotes the attachment of spinal cord and sensory neuron cells and the outgrowth of neurites in vitro. May contribute to the growth and guidance of axons in both the spinal cord and the PNS (By similarity). Major factor for vascular smooth muscle cell.</text>
</comment>
<comment type="subunit">
    <text evidence="1">Binds to the central extracellular domain of APP and inhibits beta-secretase cleavage of APP.</text>
</comment>
<comment type="interaction">
    <interactant intactId="EBI-2431846">
        <id>Q9HCB6</id>
    </interactant>
    <interactant intactId="EBI-302641">
        <id>P05067-4</id>
        <label>APP</label>
    </interactant>
    <organismsDiffer>false</organismsDiffer>
    <experiments>3</experiments>
</comment>
<comment type="interaction">
    <interactant intactId="EBI-2431846">
        <id>Q9HCB6</id>
    </interactant>
    <interactant intactId="EBI-3867333">
        <id>A8MQ03</id>
        <label>CYSRT1</label>
    </interactant>
    <organismsDiffer>false</organismsDiffer>
    <experiments>3</experiments>
</comment>
<comment type="interaction">
    <interactant intactId="EBI-2431846">
        <id>Q9HCB6</id>
    </interactant>
    <interactant intactId="EBI-724076">
        <id>Q99750</id>
        <label>MDFI</label>
    </interactant>
    <organismsDiffer>false</organismsDiffer>
    <experiments>3</experiments>
</comment>
<comment type="interaction">
    <interactant intactId="EBI-2431846">
        <id>Q9HCB6</id>
    </interactant>
    <interactant intactId="EBI-16439278">
        <id>Q6FHY5</id>
        <label>MEOX2</label>
    </interactant>
    <organismsDiffer>false</organismsDiffer>
    <experiments>3</experiments>
</comment>
<comment type="subcellular location">
    <subcellularLocation>
        <location evidence="1">Secreted</location>
        <location evidence="1">Extracellular space</location>
        <location evidence="1">Extracellular matrix</location>
    </subcellularLocation>
</comment>
<comment type="tissue specificity">
    <text evidence="6 11">Highest expression in lung, lower expression in brain, heart, kidney, liver and testis, and lowest expression in pancreas, skeletal muscle and ovary. Not expressed in spleen.</text>
</comment>
<reference key="1">
    <citation type="journal article" date="2001" name="Arch. Biochem. Biophys.">
        <title>Isolation and characterization of vascular smooth muscle cell growth promoting factor from bovine ovarian follicular fluid and its cDNA cloning from bovine and human ovary.</title>
        <authorList>
            <person name="Miyamoto K."/>
            <person name="Morishita Y."/>
            <person name="Yamazaki M."/>
            <person name="Minamino N."/>
            <person name="Kangawa K."/>
            <person name="Matsuo H."/>
            <person name="Mizutani T."/>
            <person name="Yamada K."/>
            <person name="Minegishi T."/>
        </authorList>
    </citation>
    <scope>NUCLEOTIDE SEQUENCE [MRNA]</scope>
    <scope>TISSUE SPECIFICITY</scope>
    <source>
        <tissue>Ovary</tissue>
    </source>
</reference>
<reference key="2">
    <citation type="journal article" date="2004" name="Nat. Genet.">
        <title>Complete sequencing and characterization of 21,243 full-length human cDNAs.</title>
        <authorList>
            <person name="Ota T."/>
            <person name="Suzuki Y."/>
            <person name="Nishikawa T."/>
            <person name="Otsuki T."/>
            <person name="Sugiyama T."/>
            <person name="Irie R."/>
            <person name="Wakamatsu A."/>
            <person name="Hayashi K."/>
            <person name="Sato H."/>
            <person name="Nagai K."/>
            <person name="Kimura K."/>
            <person name="Makita H."/>
            <person name="Sekine M."/>
            <person name="Obayashi M."/>
            <person name="Nishi T."/>
            <person name="Shibahara T."/>
            <person name="Tanaka T."/>
            <person name="Ishii S."/>
            <person name="Yamamoto J."/>
            <person name="Saito K."/>
            <person name="Kawai Y."/>
            <person name="Isono Y."/>
            <person name="Nakamura Y."/>
            <person name="Nagahari K."/>
            <person name="Murakami K."/>
            <person name="Yasuda T."/>
            <person name="Iwayanagi T."/>
            <person name="Wagatsuma M."/>
            <person name="Shiratori A."/>
            <person name="Sudo H."/>
            <person name="Hosoiri T."/>
            <person name="Kaku Y."/>
            <person name="Kodaira H."/>
            <person name="Kondo H."/>
            <person name="Sugawara M."/>
            <person name="Takahashi M."/>
            <person name="Kanda K."/>
            <person name="Yokoi T."/>
            <person name="Furuya T."/>
            <person name="Kikkawa E."/>
            <person name="Omura Y."/>
            <person name="Abe K."/>
            <person name="Kamihara K."/>
            <person name="Katsuta N."/>
            <person name="Sato K."/>
            <person name="Tanikawa M."/>
            <person name="Yamazaki M."/>
            <person name="Ninomiya K."/>
            <person name="Ishibashi T."/>
            <person name="Yamashita H."/>
            <person name="Murakawa K."/>
            <person name="Fujimori K."/>
            <person name="Tanai H."/>
            <person name="Kimata M."/>
            <person name="Watanabe M."/>
            <person name="Hiraoka S."/>
            <person name="Chiba Y."/>
            <person name="Ishida S."/>
            <person name="Ono Y."/>
            <person name="Takiguchi S."/>
            <person name="Watanabe S."/>
            <person name="Yosida M."/>
            <person name="Hotuta T."/>
            <person name="Kusano J."/>
            <person name="Kanehori K."/>
            <person name="Takahashi-Fujii A."/>
            <person name="Hara H."/>
            <person name="Tanase T.-O."/>
            <person name="Nomura Y."/>
            <person name="Togiya S."/>
            <person name="Komai F."/>
            <person name="Hara R."/>
            <person name="Takeuchi K."/>
            <person name="Arita M."/>
            <person name="Imose N."/>
            <person name="Musashino K."/>
            <person name="Yuuki H."/>
            <person name="Oshima A."/>
            <person name="Sasaki N."/>
            <person name="Aotsuka S."/>
            <person name="Yoshikawa Y."/>
            <person name="Matsunawa H."/>
            <person name="Ichihara T."/>
            <person name="Shiohata N."/>
            <person name="Sano S."/>
            <person name="Moriya S."/>
            <person name="Momiyama H."/>
            <person name="Satoh N."/>
            <person name="Takami S."/>
            <person name="Terashima Y."/>
            <person name="Suzuki O."/>
            <person name="Nakagawa S."/>
            <person name="Senoh A."/>
            <person name="Mizoguchi H."/>
            <person name="Goto Y."/>
            <person name="Shimizu F."/>
            <person name="Wakebe H."/>
            <person name="Hishigaki H."/>
            <person name="Watanabe T."/>
            <person name="Sugiyama A."/>
            <person name="Takemoto M."/>
            <person name="Kawakami B."/>
            <person name="Yamazaki M."/>
            <person name="Watanabe K."/>
            <person name="Kumagai A."/>
            <person name="Itakura S."/>
            <person name="Fukuzumi Y."/>
            <person name="Fujimori Y."/>
            <person name="Komiyama M."/>
            <person name="Tashiro H."/>
            <person name="Tanigami A."/>
            <person name="Fujiwara T."/>
            <person name="Ono T."/>
            <person name="Yamada K."/>
            <person name="Fujii Y."/>
            <person name="Ozaki K."/>
            <person name="Hirao M."/>
            <person name="Ohmori Y."/>
            <person name="Kawabata A."/>
            <person name="Hikiji T."/>
            <person name="Kobatake N."/>
            <person name="Inagaki H."/>
            <person name="Ikema Y."/>
            <person name="Okamoto S."/>
            <person name="Okitani R."/>
            <person name="Kawakami T."/>
            <person name="Noguchi S."/>
            <person name="Itoh T."/>
            <person name="Shigeta K."/>
            <person name="Senba T."/>
            <person name="Matsumura K."/>
            <person name="Nakajima Y."/>
            <person name="Mizuno T."/>
            <person name="Morinaga M."/>
            <person name="Sasaki M."/>
            <person name="Togashi T."/>
            <person name="Oyama M."/>
            <person name="Hata H."/>
            <person name="Watanabe M."/>
            <person name="Komatsu T."/>
            <person name="Mizushima-Sugano J."/>
            <person name="Satoh T."/>
            <person name="Shirai Y."/>
            <person name="Takahashi Y."/>
            <person name="Nakagawa K."/>
            <person name="Okumura K."/>
            <person name="Nagase T."/>
            <person name="Nomura N."/>
            <person name="Kikuchi H."/>
            <person name="Masuho Y."/>
            <person name="Yamashita R."/>
            <person name="Nakai K."/>
            <person name="Yada T."/>
            <person name="Nakamura Y."/>
            <person name="Ohara O."/>
            <person name="Isogai T."/>
            <person name="Sugano S."/>
        </authorList>
    </citation>
    <scope>NUCLEOTIDE SEQUENCE [LARGE SCALE MRNA]</scope>
    <source>
        <tissue>Placenta</tissue>
    </source>
</reference>
<reference key="3">
    <citation type="submission" date="2005-09" db="EMBL/GenBank/DDBJ databases">
        <authorList>
            <person name="Mural R.J."/>
            <person name="Istrail S."/>
            <person name="Sutton G.G."/>
            <person name="Florea L."/>
            <person name="Halpern A.L."/>
            <person name="Mobarry C.M."/>
            <person name="Lippert R."/>
            <person name="Walenz B."/>
            <person name="Shatkay H."/>
            <person name="Dew I."/>
            <person name="Miller J.R."/>
            <person name="Flanigan M.J."/>
            <person name="Edwards N.J."/>
            <person name="Bolanos R."/>
            <person name="Fasulo D."/>
            <person name="Halldorsson B.V."/>
            <person name="Hannenhalli S."/>
            <person name="Turner R."/>
            <person name="Yooseph S."/>
            <person name="Lu F."/>
            <person name="Nusskern D.R."/>
            <person name="Shue B.C."/>
            <person name="Zheng X.H."/>
            <person name="Zhong F."/>
            <person name="Delcher A.L."/>
            <person name="Huson D.H."/>
            <person name="Kravitz S.A."/>
            <person name="Mouchard L."/>
            <person name="Reinert K."/>
            <person name="Remington K.A."/>
            <person name="Clark A.G."/>
            <person name="Waterman M.S."/>
            <person name="Eichler E.E."/>
            <person name="Adams M.D."/>
            <person name="Hunkapiller M.W."/>
            <person name="Myers E.W."/>
            <person name="Venter J.C."/>
        </authorList>
    </citation>
    <scope>NUCLEOTIDE SEQUENCE [LARGE SCALE GENOMIC DNA]</scope>
</reference>
<reference key="4">
    <citation type="journal article" date="2004" name="Genome Res.">
        <title>The status, quality, and expansion of the NIH full-length cDNA project: the Mammalian Gene Collection (MGC).</title>
        <authorList>
            <consortium name="The MGC Project Team"/>
        </authorList>
    </citation>
    <scope>NUCLEOTIDE SEQUENCE [LARGE SCALE MRNA]</scope>
    <source>
        <tissue>Brain</tissue>
    </source>
</reference>
<reference key="5">
    <citation type="journal article" date="1998" name="DNA Res.">
        <title>Prediction of the coding sequences of unidentified human genes. XI. The complete sequences of 100 new cDNA clones from brain which code for large proteins in vitro.</title>
        <authorList>
            <person name="Nagase T."/>
            <person name="Ishikawa K."/>
            <person name="Suyama M."/>
            <person name="Kikuno R."/>
            <person name="Miyajima N."/>
            <person name="Tanaka A."/>
            <person name="Kotani H."/>
            <person name="Nomura N."/>
            <person name="Ohara O."/>
        </authorList>
    </citation>
    <scope>NUCLEOTIDE SEQUENCE [LARGE SCALE MRNA] OF 84-807</scope>
    <scope>TISSUE SPECIFICITY</scope>
    <source>
        <tissue>Brain</tissue>
    </source>
</reference>
<reference key="6">
    <citation type="journal article" date="2002" name="DNA Res.">
        <title>Construction of expression-ready cDNA clones for KIAA genes: manual curation of 330 KIAA cDNA clones.</title>
        <authorList>
            <person name="Nakajima D."/>
            <person name="Okazaki N."/>
            <person name="Yamakawa H."/>
            <person name="Kikuno R."/>
            <person name="Ohara O."/>
            <person name="Nagase T."/>
        </authorList>
    </citation>
    <scope>SEQUENCE REVISION</scope>
</reference>
<reference key="7">
    <citation type="journal article" date="2002" name="Mol. Cell. Proteomics">
        <title>C-mannosylation and O-fucosylation of thrombospondin type 1 repeats.</title>
        <authorList>
            <person name="Gonzalez de Peredo A."/>
            <person name="Klein D."/>
            <person name="Macek B."/>
            <person name="Hess D."/>
            <person name="Peter-Katalinic J."/>
            <person name="Hofsteenge J."/>
        </authorList>
    </citation>
    <scope>GLYCOSYLATION AT TRP-448; TRP-451; TRP-507; TRP-510; TRP-564; TRP-620; TRP-623 AND TRP-674</scope>
</reference>
<reference key="8">
    <citation type="journal article" date="2008" name="Acta Crystallogr. D">
        <title>Structure of the F-spondin reeler domain reveals a unique beta-sandwich fold with a deformable disulfide-bonded loop.</title>
        <authorList>
            <person name="Nagae M."/>
            <person name="Nishikawa K."/>
            <person name="Yasui N."/>
            <person name="Yamasaki M."/>
            <person name="Nogi T."/>
            <person name="Takagi J."/>
        </authorList>
    </citation>
    <scope>X-RAY CRYSTALLOGRAPHY (1.45 ANGSTROMS) OF 40-186</scope>
    <scope>DISULFIDE BONDS</scope>
</reference>
<reference key="9">
    <citation type="journal article" date="2008" name="J. Mol. Biol.">
        <title>The crystal structure of the heparin-binding reelin-N domain of f-spondin.</title>
        <authorList>
            <person name="Tan K."/>
            <person name="Duquette M."/>
            <person name="Liu J.H."/>
            <person name="Lawler J."/>
            <person name="Wang J.H."/>
        </authorList>
    </citation>
    <scope>X-RAY CRYSTALLOGRAPHY (2.0 ANGSTROMS) OF 29-194</scope>
    <scope>DISULFIDE BONDS</scope>
</reference>
<reference key="10">
    <citation type="journal article" date="2011" name="BMC Struct. Biol.">
        <title>The structure of the Ca+-binding, glycosylated F-spondin domain of F-spondin - A C2-domain variant in an extracellular matrix protein.</title>
        <authorList>
            <person name="Tan K."/>
            <person name="Lawler J."/>
        </authorList>
    </citation>
    <scope>X-RAY CRYSTALLOGRAPHY (1.95 ANGSTROMS) OF 191-434 IN COMPLEX WITH CALCIUM</scope>
    <scope>DISULFIDE BONDS</scope>
    <scope>GLYCOSYLATION AT ASN-214</scope>
</reference>
<name>SPON1_HUMAN</name>
<sequence>MRLSPAPLKLSRTPALLALALPLAAALAFSDETLDKVPKSEGYCSRILRAQGTRREGYTEFSLRVEGDPDFYKPGTSYRVTLSAAPPSYFRGFTLIALRENREGDKEEDHAGTFQIIDEEETQFMSNCPVAVTESTPRRRTRIQVFWIAPPAGTGCVILKASIVQKRIIYFQDEGSLTKKLCEQDSTFDGVTDKPILDCCACGTAKYRLTFYGNWSEKTHPKDYPRRANHWSAIIGGSHSKNYVLWEYGGYASEGVKQVAELGSPVKMEEEIRQQSDEVLTVIKAKAQWPAWQPLNVRAAPSAEFSVDRTRHLMSFLTMMGPSPDWNVGLSAEDLCTKECGWVQKVVQDLIPWDAGTDSGVTYESPNKPTIPQEKIRPLTSLDHPQSPFYDPEGGSITQVARVVIERIARKGEQCNIVPDNVDDIVADLAPEEKDEDDTPETCIYSNWSPWSACSSSTCDKGKRMRQRMLKAQLDLSVPCPDTQDFQPCMGPGCSDEDGSTCTMSEWITWSPCSISCGMGMRSRERYVKQFPEDGSVCTLPTEETEKCTVNEECSPSSCLMTEWGEWDECSATCGMGMKKRHRMIKMNPADGSMCKAETSQAEKCMMPECHTIPCLLSPWSEWSDCSVTCGKGMRTRQRMLKSLAELGDCNEDLEQVEKCMLPECPIDCELTEWSQWSECNKSCGKGHVIRTRMIQMEPQFGGAPCPETVQRKKCRIRKCLRNPSIQKLRWREARESRRSEQLKEESEGEQFPGCRMRPWTAWSECTKLCGGGIQERYMTVKKRFKSSQFTSCKDKKEIRACNVHPC</sequence>
<keyword id="KW-0002">3D-structure</keyword>
<keyword id="KW-0130">Cell adhesion</keyword>
<keyword id="KW-1015">Disulfide bond</keyword>
<keyword id="KW-0272">Extracellular matrix</keyword>
<keyword id="KW-0325">Glycoprotein</keyword>
<keyword id="KW-0479">Metal-binding</keyword>
<keyword id="KW-1267">Proteomics identification</keyword>
<keyword id="KW-1185">Reference proteome</keyword>
<keyword id="KW-0677">Repeat</keyword>
<keyword id="KW-0964">Secreted</keyword>
<keyword id="KW-0732">Signal</keyword>
<organism>
    <name type="scientific">Homo sapiens</name>
    <name type="common">Human</name>
    <dbReference type="NCBI Taxonomy" id="9606"/>
    <lineage>
        <taxon>Eukaryota</taxon>
        <taxon>Metazoa</taxon>
        <taxon>Chordata</taxon>
        <taxon>Craniata</taxon>
        <taxon>Vertebrata</taxon>
        <taxon>Euteleostomi</taxon>
        <taxon>Mammalia</taxon>
        <taxon>Eutheria</taxon>
        <taxon>Euarchontoglires</taxon>
        <taxon>Primates</taxon>
        <taxon>Haplorrhini</taxon>
        <taxon>Catarrhini</taxon>
        <taxon>Hominidae</taxon>
        <taxon>Homo</taxon>
    </lineage>
</organism>
<proteinExistence type="evidence at protein level"/>
<feature type="signal peptide" evidence="2">
    <location>
        <begin position="1"/>
        <end position="28"/>
    </location>
</feature>
<feature type="chain" id="PRO_0000035865" description="Spondin-1">
    <location>
        <begin position="29"/>
        <end position="807"/>
    </location>
</feature>
<feature type="domain" description="Reelin" evidence="4">
    <location>
        <begin position="29"/>
        <end position="194"/>
    </location>
</feature>
<feature type="domain" description="Spondin" evidence="5">
    <location>
        <begin position="195"/>
        <end position="388"/>
    </location>
</feature>
<feature type="domain" description="TSP type-1 1" evidence="3">
    <location>
        <begin position="442"/>
        <end position="495"/>
    </location>
</feature>
<feature type="domain" description="TSP type-1 2" evidence="3">
    <location>
        <begin position="501"/>
        <end position="555"/>
    </location>
</feature>
<feature type="domain" description="TSP type-1 3" evidence="3">
    <location>
        <begin position="558"/>
        <end position="611"/>
    </location>
</feature>
<feature type="domain" description="TSP type-1 4" evidence="3">
    <location>
        <begin position="614"/>
        <end position="666"/>
    </location>
</feature>
<feature type="domain" description="TSP type-1 5" evidence="3">
    <location>
        <begin position="668"/>
        <end position="721"/>
    </location>
</feature>
<feature type="domain" description="TSP type-1 6" evidence="3">
    <location>
        <begin position="754"/>
        <end position="806"/>
    </location>
</feature>
<feature type="binding site" evidence="10 16">
    <location>
        <position position="325"/>
    </location>
    <ligand>
        <name>Ca(2+)</name>
        <dbReference type="ChEBI" id="CHEBI:29108"/>
    </ligand>
</feature>
<feature type="binding site" evidence="10 16">
    <location>
        <position position="354"/>
    </location>
    <ligand>
        <name>Ca(2+)</name>
        <dbReference type="ChEBI" id="CHEBI:29108"/>
    </ligand>
</feature>
<feature type="binding site" evidence="10 16">
    <location>
        <position position="358"/>
    </location>
    <ligand>
        <name>Ca(2+)</name>
        <dbReference type="ChEBI" id="CHEBI:29108"/>
    </ligand>
</feature>
<feature type="glycosylation site" description="N-linked (GlcNAc...) asparagine" evidence="10 16">
    <location>
        <position position="214"/>
    </location>
</feature>
<feature type="glycosylation site" description="C-linked (Man) tryptophan" evidence="7">
    <location>
        <position position="448"/>
    </location>
</feature>
<feature type="glycosylation site" description="C-linked (Man) tryptophan; partial" evidence="7">
    <location>
        <position position="451"/>
    </location>
</feature>
<feature type="glycosylation site" description="C-linked (Man) tryptophan" evidence="7">
    <location>
        <position position="507"/>
    </location>
</feature>
<feature type="glycosylation site" description="C-linked (Man) tryptophan; partial" evidence="7">
    <location>
        <position position="510"/>
    </location>
</feature>
<feature type="glycosylation site" description="C-linked (Man) tryptophan" evidence="7">
    <location>
        <position position="564"/>
    </location>
</feature>
<feature type="glycosylation site" description="C-linked (Man) tryptophan; partial" evidence="7">
    <location>
        <position position="620"/>
    </location>
</feature>
<feature type="glycosylation site" description="C-linked (Man) tryptophan" evidence="7">
    <location>
        <position position="623"/>
    </location>
</feature>
<feature type="glycosylation site" description="C-linked (Man) tryptophan" evidence="7">
    <location>
        <position position="674"/>
    </location>
</feature>
<feature type="glycosylation site" description="N-linked (GlcNAc...) asparagine" evidence="2">
    <location>
        <position position="681"/>
    </location>
</feature>
<feature type="disulfide bond" evidence="8 9 13 14 15">
    <location>
        <begin position="44"/>
        <end position="128"/>
    </location>
</feature>
<feature type="disulfide bond" evidence="8 9 13 14 15">
    <location>
        <begin position="156"/>
        <end position="182"/>
    </location>
</feature>
<feature type="disulfide bond" evidence="10 16">
    <location>
        <begin position="199"/>
        <end position="336"/>
    </location>
</feature>
<feature type="disulfide bond" evidence="10 16">
    <location>
        <begin position="200"/>
        <end position="340"/>
    </location>
</feature>
<feature type="disulfide bond" evidence="10 16">
    <location>
        <begin position="202"/>
        <end position="415"/>
    </location>
</feature>
<feature type="disulfide bond" evidence="3">
    <location>
        <begin position="443"/>
        <end position="480"/>
    </location>
</feature>
<feature type="disulfide bond" evidence="3">
    <location>
        <begin position="454"/>
        <end position="489"/>
    </location>
</feature>
<feature type="disulfide bond" evidence="3">
    <location>
        <begin position="459"/>
        <end position="494"/>
    </location>
</feature>
<feature type="disulfide bond" evidence="3">
    <location>
        <begin position="502"/>
        <end position="538"/>
    </location>
</feature>
<feature type="disulfide bond" evidence="3">
    <location>
        <begin position="513"/>
        <end position="517"/>
    </location>
</feature>
<feature type="disulfide bond" evidence="3">
    <location>
        <begin position="548"/>
        <end position="554"/>
    </location>
</feature>
<feature type="disulfide bond" evidence="3">
    <location>
        <begin position="559"/>
        <end position="595"/>
    </location>
</feature>
<feature type="disulfide bond" evidence="3">
    <location>
        <begin position="570"/>
        <end position="574"/>
    </location>
</feature>
<feature type="disulfide bond" evidence="3">
    <location>
        <begin position="605"/>
        <end position="610"/>
    </location>
</feature>
<feature type="disulfide bond" evidence="3">
    <location>
        <begin position="615"/>
        <end position="650"/>
    </location>
</feature>
<feature type="disulfide bond" evidence="3">
    <location>
        <begin position="626"/>
        <end position="630"/>
    </location>
</feature>
<feature type="disulfide bond" evidence="3">
    <location>
        <begin position="660"/>
        <end position="665"/>
    </location>
</feature>
<feature type="sequence conflict" description="In Ref. 2; BAC11217." evidence="12" ref="2">
    <original>S</original>
    <variation>P</variation>
    <location>
        <position position="500"/>
    </location>
</feature>
<feature type="sequence conflict" description="In Ref. 1; BAB18461." evidence="12" ref="1">
    <original>T</original>
    <variation>M</variation>
    <location>
        <position position="545"/>
    </location>
</feature>
<feature type="sequence conflict" description="In Ref. 2; BAC11217." evidence="12" ref="2">
    <original>C</original>
    <variation>Y</variation>
    <location>
        <position position="570"/>
    </location>
</feature>
<feature type="sequence conflict" description="In Ref. 2; BAC11217." evidence="12" ref="2">
    <original>C</original>
    <variation>R</variation>
    <location>
        <position position="605"/>
    </location>
</feature>
<feature type="sequence conflict" description="In Ref. 4; AAH19825." evidence="12" ref="4">
    <original>I</original>
    <variation>T</variation>
    <location>
        <position position="695"/>
    </location>
</feature>
<feature type="sequence conflict" description="In Ref. 1; BAB18461." evidence="12" ref="1">
    <original>L</original>
    <variation>P</variation>
    <location>
        <position position="729"/>
    </location>
</feature>
<feature type="turn" evidence="18">
    <location>
        <begin position="43"/>
        <end position="46"/>
    </location>
</feature>
<feature type="turn" evidence="17">
    <location>
        <begin position="48"/>
        <end position="50"/>
    </location>
</feature>
<feature type="strand" evidence="17">
    <location>
        <begin position="60"/>
        <end position="65"/>
    </location>
</feature>
<feature type="strand" evidence="17">
    <location>
        <begin position="70"/>
        <end position="72"/>
    </location>
</feature>
<feature type="strand" evidence="17">
    <location>
        <begin position="77"/>
        <end position="84"/>
    </location>
</feature>
<feature type="strand" evidence="17">
    <location>
        <begin position="90"/>
        <end position="99"/>
    </location>
</feature>
<feature type="strand" evidence="18">
    <location>
        <begin position="104"/>
        <end position="106"/>
    </location>
</feature>
<feature type="helix" evidence="17">
    <location>
        <begin position="107"/>
        <end position="109"/>
    </location>
</feature>
<feature type="strand" evidence="17">
    <location>
        <begin position="112"/>
        <end position="117"/>
    </location>
</feature>
<feature type="turn" evidence="17">
    <location>
        <begin position="119"/>
        <end position="121"/>
    </location>
</feature>
<feature type="strand" evidence="17">
    <location>
        <begin position="122"/>
        <end position="125"/>
    </location>
</feature>
<feature type="strand" evidence="17">
    <location>
        <begin position="128"/>
        <end position="136"/>
    </location>
</feature>
<feature type="strand" evidence="17">
    <location>
        <begin position="140"/>
        <end position="148"/>
    </location>
</feature>
<feature type="strand" evidence="17">
    <location>
        <begin position="157"/>
        <end position="169"/>
    </location>
</feature>
<feature type="strand" evidence="17">
    <location>
        <begin position="173"/>
        <end position="175"/>
    </location>
</feature>
<feature type="strand" evidence="17">
    <location>
        <begin position="178"/>
        <end position="181"/>
    </location>
</feature>
<feature type="strand" evidence="19">
    <location>
        <begin position="203"/>
        <end position="213"/>
    </location>
</feature>
<feature type="turn" evidence="19">
    <location>
        <begin position="217"/>
        <end position="219"/>
    </location>
</feature>
<feature type="turn" evidence="19">
    <location>
        <begin position="226"/>
        <end position="228"/>
    </location>
</feature>
<feature type="strand" evidence="19">
    <location>
        <begin position="234"/>
        <end position="239"/>
    </location>
</feature>
<feature type="helix" evidence="19">
    <location>
        <begin position="254"/>
        <end position="262"/>
    </location>
</feature>
<feature type="helix" evidence="19">
    <location>
        <begin position="266"/>
        <end position="273"/>
    </location>
</feature>
<feature type="helix" evidence="19">
    <location>
        <begin position="274"/>
        <end position="278"/>
    </location>
</feature>
<feature type="strand" evidence="19">
    <location>
        <begin position="279"/>
        <end position="285"/>
    </location>
</feature>
<feature type="strand" evidence="19">
    <location>
        <begin position="288"/>
        <end position="291"/>
    </location>
</feature>
<feature type="turn" evidence="19">
    <location>
        <begin position="295"/>
        <end position="297"/>
    </location>
</feature>
<feature type="strand" evidence="19">
    <location>
        <begin position="302"/>
        <end position="311"/>
    </location>
</feature>
<feature type="strand" evidence="19">
    <location>
        <begin position="313"/>
        <end position="322"/>
    </location>
</feature>
<feature type="strand" evidence="19">
    <location>
        <begin position="324"/>
        <end position="334"/>
    </location>
</feature>
<feature type="strand" evidence="19">
    <location>
        <begin position="340"/>
        <end position="342"/>
    </location>
</feature>
<feature type="strand" evidence="19">
    <location>
        <begin position="344"/>
        <end position="350"/>
    </location>
</feature>
<feature type="strand" evidence="19">
    <location>
        <begin position="356"/>
        <end position="358"/>
    </location>
</feature>
<feature type="strand" evidence="19">
    <location>
        <begin position="401"/>
        <end position="412"/>
    </location>
</feature>
<gene>
    <name type="primary">SPON1</name>
    <name type="synonym">KIAA0762</name>
    <name type="synonym">VSGP</name>
</gene>